<feature type="chain" id="PRO_0000135957" description="Replication factor C large subunit">
    <location>
        <begin position="1"/>
        <end position="430"/>
    </location>
</feature>
<feature type="binding site" evidence="1">
    <location>
        <begin position="75"/>
        <end position="82"/>
    </location>
    <ligand>
        <name>ATP</name>
        <dbReference type="ChEBI" id="CHEBI:30616"/>
    </ligand>
</feature>
<organism>
    <name type="scientific">Nanoarchaeum equitans (strain Kin4-M)</name>
    <dbReference type="NCBI Taxonomy" id="228908"/>
    <lineage>
        <taxon>Archaea</taxon>
        <taxon>Nanobdellota</taxon>
        <taxon>Candidatus Nanoarchaeia</taxon>
        <taxon>Nanoarchaeales</taxon>
        <taxon>Nanoarchaeaceae</taxon>
        <taxon>Nanoarchaeum</taxon>
    </lineage>
</organism>
<evidence type="ECO:0000255" key="1">
    <source>
        <dbReference type="HAMAP-Rule" id="MF_01508"/>
    </source>
</evidence>
<comment type="function">
    <text evidence="1">Part of the RFC clamp loader complex which loads the PCNA sliding clamp onto DNA.</text>
</comment>
<comment type="subunit">
    <text evidence="1">Heteromultimer composed of small subunits (RfcS) and large subunits (RfcL).</text>
</comment>
<comment type="similarity">
    <text evidence="1">Belongs to the activator 1 small subunits family. RfcL subfamily.</text>
</comment>
<dbReference type="EMBL" id="AE017199">
    <property type="protein sequence ID" value="AAR39275.1"/>
    <property type="molecule type" value="Genomic_DNA"/>
</dbReference>
<dbReference type="SMR" id="P60373"/>
<dbReference type="STRING" id="228908.NEQ430"/>
<dbReference type="EnsemblBacteria" id="AAR39275">
    <property type="protein sequence ID" value="AAR39275"/>
    <property type="gene ID" value="NEQ430"/>
</dbReference>
<dbReference type="KEGG" id="neq:NEQ430"/>
<dbReference type="PATRIC" id="fig|228908.8.peg.441"/>
<dbReference type="HOGENOM" id="CLU_027255_1_1_2"/>
<dbReference type="Proteomes" id="UP000000578">
    <property type="component" value="Chromosome"/>
</dbReference>
<dbReference type="GO" id="GO:0005524">
    <property type="term" value="F:ATP binding"/>
    <property type="evidence" value="ECO:0007669"/>
    <property type="project" value="UniProtKB-UniRule"/>
</dbReference>
<dbReference type="GO" id="GO:0016887">
    <property type="term" value="F:ATP hydrolysis activity"/>
    <property type="evidence" value="ECO:0007669"/>
    <property type="project" value="InterPro"/>
</dbReference>
<dbReference type="GO" id="GO:0003689">
    <property type="term" value="F:DNA clamp loader activity"/>
    <property type="evidence" value="ECO:0007669"/>
    <property type="project" value="UniProtKB-UniRule"/>
</dbReference>
<dbReference type="GO" id="GO:0006260">
    <property type="term" value="P:DNA replication"/>
    <property type="evidence" value="ECO:0007669"/>
    <property type="project" value="UniProtKB-UniRule"/>
</dbReference>
<dbReference type="CDD" id="cd00009">
    <property type="entry name" value="AAA"/>
    <property type="match status" value="1"/>
</dbReference>
<dbReference type="CDD" id="cd18140">
    <property type="entry name" value="HLD_clamp_RFC"/>
    <property type="match status" value="1"/>
</dbReference>
<dbReference type="Gene3D" id="1.10.8.60">
    <property type="match status" value="1"/>
</dbReference>
<dbReference type="Gene3D" id="3.40.50.300">
    <property type="entry name" value="P-loop containing nucleotide triphosphate hydrolases"/>
    <property type="match status" value="1"/>
</dbReference>
<dbReference type="HAMAP" id="MF_01508">
    <property type="entry name" value="RfcL"/>
    <property type="match status" value="1"/>
</dbReference>
<dbReference type="InterPro" id="IPR003593">
    <property type="entry name" value="AAA+_ATPase"/>
</dbReference>
<dbReference type="InterPro" id="IPR003959">
    <property type="entry name" value="ATPase_AAA_core"/>
</dbReference>
<dbReference type="InterPro" id="IPR027417">
    <property type="entry name" value="P-loop_NTPase"/>
</dbReference>
<dbReference type="InterPro" id="IPR023935">
    <property type="entry name" value="Rep_factor-C_lsu"/>
</dbReference>
<dbReference type="InterPro" id="IPR047854">
    <property type="entry name" value="RFC_lid"/>
</dbReference>
<dbReference type="NCBIfam" id="NF003229">
    <property type="entry name" value="PRK04195.1-5"/>
    <property type="match status" value="1"/>
</dbReference>
<dbReference type="PANTHER" id="PTHR23389">
    <property type="entry name" value="CHROMOSOME TRANSMISSION FIDELITY FACTOR 18"/>
    <property type="match status" value="1"/>
</dbReference>
<dbReference type="PANTHER" id="PTHR23389:SF6">
    <property type="entry name" value="REPLICATION FACTOR C SUBUNIT 1"/>
    <property type="match status" value="1"/>
</dbReference>
<dbReference type="Pfam" id="PF00004">
    <property type="entry name" value="AAA"/>
    <property type="match status" value="1"/>
</dbReference>
<dbReference type="Pfam" id="PF21960">
    <property type="entry name" value="RCF1-5-like_lid"/>
    <property type="match status" value="1"/>
</dbReference>
<dbReference type="SMART" id="SM00382">
    <property type="entry name" value="AAA"/>
    <property type="match status" value="1"/>
</dbReference>
<dbReference type="SUPFAM" id="SSF52540">
    <property type="entry name" value="P-loop containing nucleoside triphosphate hydrolases"/>
    <property type="match status" value="1"/>
</dbReference>
<sequence>MPSLWDYLNKDKKPVIKKVEPPKKKEIKRDIPLFIKYRPKTLDEVENQEQAKQILRDYVINYKKKYKGKALLLYGPPGTGKTSSVYALANELGYEVLEVNASDERDAIHIHHIVGEASKGKPLFHKGRIILVDEVDGLSGKEDRGGVGALVNIIKQSSWPIICTANDPWDQKLKKLREISIMVEFKRLSPKHVYNVLKKIVTNEKIKISDKILWDIAYKSGGDLRAAINDLETIIKSGIIDENFVKALGNREQEIDIFKALGIMFKTENLATAVSAFNNVDLEFDEIFPWLEENIPVEYKRLDDIYRAYYWLGKADIFRKRIIKTQHWRLLVYAQIDAYGGIALAKNKKYPGFTRYQPPKRLKLLAQMKEKLEKLREHVSKLREKLHMSKRDIIKYYVSFALKLKNLNKTVADKFLKAIGLSLKEIEEIR</sequence>
<accession>P60373</accession>
<proteinExistence type="inferred from homology"/>
<gene>
    <name evidence="1" type="primary">rfcL</name>
    <name type="ordered locus">NEQ430</name>
</gene>
<keyword id="KW-0067">ATP-binding</keyword>
<keyword id="KW-0235">DNA replication</keyword>
<keyword id="KW-0547">Nucleotide-binding</keyword>
<keyword id="KW-1185">Reference proteome</keyword>
<protein>
    <recommendedName>
        <fullName evidence="1">Replication factor C large subunit</fullName>
        <shortName evidence="1">RFC large subunit</shortName>
    </recommendedName>
    <alternativeName>
        <fullName evidence="1">Clamp loader large subunit</fullName>
    </alternativeName>
</protein>
<reference key="1">
    <citation type="journal article" date="2003" name="Proc. Natl. Acad. Sci. U.S.A.">
        <title>The genome of Nanoarchaeum equitans: insights into early archaeal evolution and derived parasitism.</title>
        <authorList>
            <person name="Waters E."/>
            <person name="Hohn M.J."/>
            <person name="Ahel I."/>
            <person name="Graham D.E."/>
            <person name="Adams M.D."/>
            <person name="Barnstead M."/>
            <person name="Beeson K.Y."/>
            <person name="Bibbs L."/>
            <person name="Bolanos R."/>
            <person name="Keller M."/>
            <person name="Kretz K."/>
            <person name="Lin X."/>
            <person name="Mathur E."/>
            <person name="Ni J."/>
            <person name="Podar M."/>
            <person name="Richardson T."/>
            <person name="Sutton G.G."/>
            <person name="Simon M."/>
            <person name="Soell D."/>
            <person name="Stetter K.O."/>
            <person name="Short J.M."/>
            <person name="Noorderwier M."/>
        </authorList>
    </citation>
    <scope>NUCLEOTIDE SEQUENCE [LARGE SCALE GENOMIC DNA]</scope>
    <source>
        <strain>Kin4-M</strain>
    </source>
</reference>
<name>RFCL_NANEQ</name>